<keyword id="KW-1185">Reference proteome</keyword>
<keyword id="KW-0687">Ribonucleoprotein</keyword>
<keyword id="KW-0689">Ribosomal protein</keyword>
<name>RL34_STRAW</name>
<organism>
    <name type="scientific">Streptomyces avermitilis (strain ATCC 31267 / DSM 46492 / JCM 5070 / NBRC 14893 / NCIMB 12804 / NRRL 8165 / MA-4680)</name>
    <dbReference type="NCBI Taxonomy" id="227882"/>
    <lineage>
        <taxon>Bacteria</taxon>
        <taxon>Bacillati</taxon>
        <taxon>Actinomycetota</taxon>
        <taxon>Actinomycetes</taxon>
        <taxon>Kitasatosporales</taxon>
        <taxon>Streptomycetaceae</taxon>
        <taxon>Streptomyces</taxon>
    </lineage>
</organism>
<protein>
    <recommendedName>
        <fullName evidence="1">Large ribosomal subunit protein bL34</fullName>
    </recommendedName>
    <alternativeName>
        <fullName evidence="2">50S ribosomal protein L34</fullName>
    </alternativeName>
</protein>
<evidence type="ECO:0000255" key="1">
    <source>
        <dbReference type="HAMAP-Rule" id="MF_00391"/>
    </source>
</evidence>
<evidence type="ECO:0000305" key="2"/>
<accession>Q82FD9</accession>
<proteinExistence type="inferred from homology"/>
<feature type="chain" id="PRO_0000187470" description="Large ribosomal subunit protein bL34">
    <location>
        <begin position="1"/>
        <end position="45"/>
    </location>
</feature>
<comment type="similarity">
    <text evidence="1">Belongs to the bacterial ribosomal protein bL34 family.</text>
</comment>
<reference key="1">
    <citation type="journal article" date="2001" name="Proc. Natl. Acad. Sci. U.S.A.">
        <title>Genome sequence of an industrial microorganism Streptomyces avermitilis: deducing the ability of producing secondary metabolites.</title>
        <authorList>
            <person name="Omura S."/>
            <person name="Ikeda H."/>
            <person name="Ishikawa J."/>
            <person name="Hanamoto A."/>
            <person name="Takahashi C."/>
            <person name="Shinose M."/>
            <person name="Takahashi Y."/>
            <person name="Horikawa H."/>
            <person name="Nakazawa H."/>
            <person name="Osonoe T."/>
            <person name="Kikuchi H."/>
            <person name="Shiba T."/>
            <person name="Sakaki Y."/>
            <person name="Hattori M."/>
        </authorList>
    </citation>
    <scope>NUCLEOTIDE SEQUENCE [LARGE SCALE GENOMIC DNA]</scope>
    <source>
        <strain>ATCC 31267 / DSM 46492 / JCM 5070 / NBRC 14893 / NCIMB 12804 / NRRL 8165 / MA-4680</strain>
    </source>
</reference>
<reference key="2">
    <citation type="journal article" date="2003" name="Nat. Biotechnol.">
        <title>Complete genome sequence and comparative analysis of the industrial microorganism Streptomyces avermitilis.</title>
        <authorList>
            <person name="Ikeda H."/>
            <person name="Ishikawa J."/>
            <person name="Hanamoto A."/>
            <person name="Shinose M."/>
            <person name="Kikuchi H."/>
            <person name="Shiba T."/>
            <person name="Sakaki Y."/>
            <person name="Hattori M."/>
            <person name="Omura S."/>
        </authorList>
    </citation>
    <scope>NUCLEOTIDE SEQUENCE [LARGE SCALE GENOMIC DNA]</scope>
    <source>
        <strain>ATCC 31267 / DSM 46492 / JCM 5070 / NBRC 14893 / NCIMB 12804 / NRRL 8165 / MA-4680</strain>
    </source>
</reference>
<gene>
    <name evidence="1" type="primary">rpmH</name>
    <name type="ordered locus">SAV_4315</name>
</gene>
<dbReference type="EMBL" id="BA000030">
    <property type="protein sequence ID" value="BAC72027.1"/>
    <property type="molecule type" value="Genomic_DNA"/>
</dbReference>
<dbReference type="RefSeq" id="WP_010985740.1">
    <property type="nucleotide sequence ID" value="NZ_JZJK01000079.1"/>
</dbReference>
<dbReference type="SMR" id="Q82FD9"/>
<dbReference type="GeneID" id="41541395"/>
<dbReference type="KEGG" id="sma:SAVERM_4315"/>
<dbReference type="eggNOG" id="COG0230">
    <property type="taxonomic scope" value="Bacteria"/>
</dbReference>
<dbReference type="HOGENOM" id="CLU_129938_2_1_11"/>
<dbReference type="OrthoDB" id="9804832at2"/>
<dbReference type="Proteomes" id="UP000000428">
    <property type="component" value="Chromosome"/>
</dbReference>
<dbReference type="GO" id="GO:1990904">
    <property type="term" value="C:ribonucleoprotein complex"/>
    <property type="evidence" value="ECO:0007669"/>
    <property type="project" value="UniProtKB-KW"/>
</dbReference>
<dbReference type="GO" id="GO:0005840">
    <property type="term" value="C:ribosome"/>
    <property type="evidence" value="ECO:0007669"/>
    <property type="project" value="UniProtKB-KW"/>
</dbReference>
<dbReference type="GO" id="GO:0003735">
    <property type="term" value="F:structural constituent of ribosome"/>
    <property type="evidence" value="ECO:0007669"/>
    <property type="project" value="InterPro"/>
</dbReference>
<dbReference type="GO" id="GO:0006412">
    <property type="term" value="P:translation"/>
    <property type="evidence" value="ECO:0007669"/>
    <property type="project" value="UniProtKB-UniRule"/>
</dbReference>
<dbReference type="FunFam" id="1.10.287.3980:FF:000001">
    <property type="entry name" value="Mitochondrial ribosomal protein L34"/>
    <property type="match status" value="1"/>
</dbReference>
<dbReference type="Gene3D" id="1.10.287.3980">
    <property type="match status" value="1"/>
</dbReference>
<dbReference type="HAMAP" id="MF_00391">
    <property type="entry name" value="Ribosomal_bL34"/>
    <property type="match status" value="1"/>
</dbReference>
<dbReference type="InterPro" id="IPR000271">
    <property type="entry name" value="Ribosomal_bL34"/>
</dbReference>
<dbReference type="InterPro" id="IPR020939">
    <property type="entry name" value="Ribosomal_bL34_CS"/>
</dbReference>
<dbReference type="NCBIfam" id="TIGR01030">
    <property type="entry name" value="rpmH_bact"/>
    <property type="match status" value="1"/>
</dbReference>
<dbReference type="PANTHER" id="PTHR14503:SF4">
    <property type="entry name" value="LARGE RIBOSOMAL SUBUNIT PROTEIN BL34M"/>
    <property type="match status" value="1"/>
</dbReference>
<dbReference type="PANTHER" id="PTHR14503">
    <property type="entry name" value="MITOCHONDRIAL RIBOSOMAL PROTEIN 34 FAMILY MEMBER"/>
    <property type="match status" value="1"/>
</dbReference>
<dbReference type="Pfam" id="PF00468">
    <property type="entry name" value="Ribosomal_L34"/>
    <property type="match status" value="1"/>
</dbReference>
<dbReference type="PROSITE" id="PS00784">
    <property type="entry name" value="RIBOSOMAL_L34"/>
    <property type="match status" value="1"/>
</dbReference>
<sequence>MSKRTFQPNNRRRAKTHGFRLRMRTRAGRAILASRRGKGRASLSA</sequence>